<feature type="chain" id="PRO_0000364343" description="Casein kinase I isoform gamma-1">
    <location>
        <begin position="1"/>
        <end position="456"/>
    </location>
</feature>
<feature type="domain" description="Protein kinase" evidence="2">
    <location>
        <begin position="43"/>
        <end position="314"/>
    </location>
</feature>
<feature type="region of interest" description="Disordered" evidence="4">
    <location>
        <begin position="1"/>
        <end position="35"/>
    </location>
</feature>
<feature type="region of interest" description="Disordered" evidence="4">
    <location>
        <begin position="349"/>
        <end position="382"/>
    </location>
</feature>
<feature type="compositionally biased region" description="Basic and acidic residues" evidence="4">
    <location>
        <begin position="1"/>
        <end position="13"/>
    </location>
</feature>
<feature type="compositionally biased region" description="Low complexity" evidence="4">
    <location>
        <begin position="17"/>
        <end position="35"/>
    </location>
</feature>
<feature type="compositionally biased region" description="Basic and acidic residues" evidence="4">
    <location>
        <begin position="350"/>
        <end position="359"/>
    </location>
</feature>
<feature type="compositionally biased region" description="Polar residues" evidence="4">
    <location>
        <begin position="360"/>
        <end position="369"/>
    </location>
</feature>
<feature type="active site" description="Proton acceptor" evidence="2 3">
    <location>
        <position position="163"/>
    </location>
</feature>
<feature type="binding site" evidence="2">
    <location>
        <begin position="49"/>
        <end position="57"/>
    </location>
    <ligand>
        <name>ATP</name>
        <dbReference type="ChEBI" id="CHEBI:30616"/>
    </ligand>
</feature>
<feature type="binding site" evidence="2">
    <location>
        <position position="72"/>
    </location>
    <ligand>
        <name>ATP</name>
        <dbReference type="ChEBI" id="CHEBI:30616"/>
    </ligand>
</feature>
<organism>
    <name type="scientific">Gallus gallus</name>
    <name type="common">Chicken</name>
    <dbReference type="NCBI Taxonomy" id="9031"/>
    <lineage>
        <taxon>Eukaryota</taxon>
        <taxon>Metazoa</taxon>
        <taxon>Chordata</taxon>
        <taxon>Craniata</taxon>
        <taxon>Vertebrata</taxon>
        <taxon>Euteleostomi</taxon>
        <taxon>Archelosauria</taxon>
        <taxon>Archosauria</taxon>
        <taxon>Dinosauria</taxon>
        <taxon>Saurischia</taxon>
        <taxon>Theropoda</taxon>
        <taxon>Coelurosauria</taxon>
        <taxon>Aves</taxon>
        <taxon>Neognathae</taxon>
        <taxon>Galloanserae</taxon>
        <taxon>Galliformes</taxon>
        <taxon>Phasianidae</taxon>
        <taxon>Phasianinae</taxon>
        <taxon>Gallus</taxon>
    </lineage>
</organism>
<sequence length="456" mass="52194">MDHPNREKDERQRTTKGMPGRSGHGSRPSSSASSGVLMVGPNFRVGKKIGCGNFGELRLGKNLYTNEYVAIKLEPIKSRAPQLHLEYRFYKQLGSAAEGLPQVYYFGPCGKYNAMVLELLGPSLEDLFDLCDRTFTLKTVLMIAIQLISRMEYVHSKNLIYRDVKPENFLIGRQGNKKDHVIHIIDFGLAKEYIDPETKKHIPYREHKSLTGTARYMSINTHLGKEQSRRDDLEALGHMFMYFLRGSLPWQGLKADTLKERYQKIGDTKRNTPVEVLCENFPEEMATYLRYVRRLDFFERPDYDYLRTIFTELFEKKGYTFDYAYDWVGRPIPTPVGSVHVDSGTSAITRDSHVHRDRPSQQALRNQASSDRRGEWEIQPSRQTNTSYLTSHLAADRHGGSVQVVSSTNGELNVDDPTGAHSNAPITAQAEVEVVEEAKCCCFFKRKRKKTAQRHK</sequence>
<name>KC1G1_CHICK</name>
<comment type="function">
    <text evidence="1">Casein kinases are operationally defined by their preferential utilization of acidic proteins such as caseins as substrates. It can phosphorylate a large number of proteins. Participates in Wnt signaling (By similarity).</text>
</comment>
<comment type="catalytic activity">
    <reaction>
        <text>L-seryl-[protein] + ATP = O-phospho-L-seryl-[protein] + ADP + H(+)</text>
        <dbReference type="Rhea" id="RHEA:17989"/>
        <dbReference type="Rhea" id="RHEA-COMP:9863"/>
        <dbReference type="Rhea" id="RHEA-COMP:11604"/>
        <dbReference type="ChEBI" id="CHEBI:15378"/>
        <dbReference type="ChEBI" id="CHEBI:29999"/>
        <dbReference type="ChEBI" id="CHEBI:30616"/>
        <dbReference type="ChEBI" id="CHEBI:83421"/>
        <dbReference type="ChEBI" id="CHEBI:456216"/>
        <dbReference type="EC" id="2.7.11.1"/>
    </reaction>
</comment>
<comment type="catalytic activity">
    <reaction>
        <text>L-threonyl-[protein] + ATP = O-phospho-L-threonyl-[protein] + ADP + H(+)</text>
        <dbReference type="Rhea" id="RHEA:46608"/>
        <dbReference type="Rhea" id="RHEA-COMP:11060"/>
        <dbReference type="Rhea" id="RHEA-COMP:11605"/>
        <dbReference type="ChEBI" id="CHEBI:15378"/>
        <dbReference type="ChEBI" id="CHEBI:30013"/>
        <dbReference type="ChEBI" id="CHEBI:30616"/>
        <dbReference type="ChEBI" id="CHEBI:61977"/>
        <dbReference type="ChEBI" id="CHEBI:456216"/>
        <dbReference type="EC" id="2.7.11.1"/>
    </reaction>
</comment>
<comment type="subcellular location">
    <subcellularLocation>
        <location evidence="1">Cytoplasm</location>
    </subcellularLocation>
</comment>
<comment type="PTM">
    <text evidence="1">Autophosphorylated.</text>
</comment>
<comment type="similarity">
    <text evidence="5">Belongs to the protein kinase superfamily. CK1 Ser/Thr protein kinase family. Casein kinase I subfamily.</text>
</comment>
<keyword id="KW-0067">ATP-binding</keyword>
<keyword id="KW-0963">Cytoplasm</keyword>
<keyword id="KW-0418">Kinase</keyword>
<keyword id="KW-0547">Nucleotide-binding</keyword>
<keyword id="KW-0597">Phosphoprotein</keyword>
<keyword id="KW-1185">Reference proteome</keyword>
<keyword id="KW-0723">Serine/threonine-protein kinase</keyword>
<keyword id="KW-0808">Transferase</keyword>
<keyword id="KW-0879">Wnt signaling pathway</keyword>
<evidence type="ECO:0000250" key="1"/>
<evidence type="ECO:0000255" key="2">
    <source>
        <dbReference type="PROSITE-ProRule" id="PRU00159"/>
    </source>
</evidence>
<evidence type="ECO:0000255" key="3">
    <source>
        <dbReference type="PROSITE-ProRule" id="PRU10027"/>
    </source>
</evidence>
<evidence type="ECO:0000256" key="4">
    <source>
        <dbReference type="SAM" id="MobiDB-lite"/>
    </source>
</evidence>
<evidence type="ECO:0000305" key="5"/>
<accession>Q5ZJS0</accession>
<gene>
    <name type="primary">CSNK1G1</name>
    <name type="ORF">RCJMB04_16d5</name>
</gene>
<dbReference type="EC" id="2.7.11.1"/>
<dbReference type="EMBL" id="AJ720364">
    <property type="protein sequence ID" value="CAG32023.1"/>
    <property type="molecule type" value="mRNA"/>
</dbReference>
<dbReference type="RefSeq" id="NP_001005800.1">
    <property type="nucleotide sequence ID" value="NM_001005800.1"/>
</dbReference>
<dbReference type="RefSeq" id="XP_015134345.1">
    <property type="nucleotide sequence ID" value="XM_015278859.1"/>
</dbReference>
<dbReference type="RefSeq" id="XP_025009588.1">
    <property type="nucleotide sequence ID" value="XM_025153820.3"/>
</dbReference>
<dbReference type="RefSeq" id="XP_025009589.1">
    <property type="nucleotide sequence ID" value="XM_025153821.3"/>
</dbReference>
<dbReference type="RefSeq" id="XP_025009591.1">
    <property type="nucleotide sequence ID" value="XM_025153823.3"/>
</dbReference>
<dbReference type="RefSeq" id="XP_040562205.1">
    <property type="nucleotide sequence ID" value="XM_040706271.2"/>
</dbReference>
<dbReference type="RefSeq" id="XP_040562206.1">
    <property type="nucleotide sequence ID" value="XM_040706272.2"/>
</dbReference>
<dbReference type="RefSeq" id="XP_046754938.1">
    <property type="nucleotide sequence ID" value="XM_046898982.1"/>
</dbReference>
<dbReference type="RefSeq" id="XP_046754939.1">
    <property type="nucleotide sequence ID" value="XM_046898983.1"/>
</dbReference>
<dbReference type="RefSeq" id="XP_046754940.1">
    <property type="nucleotide sequence ID" value="XM_046898984.1"/>
</dbReference>
<dbReference type="RefSeq" id="XP_046754941.1">
    <property type="nucleotide sequence ID" value="XM_046898985.1"/>
</dbReference>
<dbReference type="RefSeq" id="XP_046754942.1">
    <property type="nucleotide sequence ID" value="XM_046898986.1"/>
</dbReference>
<dbReference type="RefSeq" id="XP_046754943.1">
    <property type="nucleotide sequence ID" value="XM_046898987.1"/>
</dbReference>
<dbReference type="RefSeq" id="XP_046780660.1">
    <property type="nucleotide sequence ID" value="XM_046924704.1"/>
</dbReference>
<dbReference type="RefSeq" id="XP_046780661.1">
    <property type="nucleotide sequence ID" value="XM_046924705.1"/>
</dbReference>
<dbReference type="RefSeq" id="XP_046780662.1">
    <property type="nucleotide sequence ID" value="XM_046924706.1"/>
</dbReference>
<dbReference type="RefSeq" id="XP_046780663.1">
    <property type="nucleotide sequence ID" value="XM_046924707.1"/>
</dbReference>
<dbReference type="RefSeq" id="XP_046780664.1">
    <property type="nucleotide sequence ID" value="XM_046924708.1"/>
</dbReference>
<dbReference type="RefSeq" id="XP_046780665.1">
    <property type="nucleotide sequence ID" value="XM_046924709.1"/>
</dbReference>
<dbReference type="RefSeq" id="XP_046780666.1">
    <property type="nucleotide sequence ID" value="XM_046924710.1"/>
</dbReference>
<dbReference type="RefSeq" id="XP_046780667.1">
    <property type="nucleotide sequence ID" value="XM_046924711.1"/>
</dbReference>
<dbReference type="RefSeq" id="XP_046780668.1">
    <property type="nucleotide sequence ID" value="XM_046924712.1"/>
</dbReference>
<dbReference type="RefSeq" id="XP_046780669.1">
    <property type="nucleotide sequence ID" value="XM_046924713.1"/>
</dbReference>
<dbReference type="RefSeq" id="XP_046780670.1">
    <property type="nucleotide sequence ID" value="XM_046924714.1"/>
</dbReference>
<dbReference type="SMR" id="Q5ZJS0"/>
<dbReference type="FunCoup" id="Q5ZJS0">
    <property type="interactions" value="1880"/>
</dbReference>
<dbReference type="STRING" id="9031.ENSGALP00000072677"/>
<dbReference type="PaxDb" id="9031-ENSGALP00000003568"/>
<dbReference type="Ensembl" id="ENSGALT00010058276.1">
    <property type="protein sequence ID" value="ENSGALP00010035401.1"/>
    <property type="gene ID" value="ENSGALG00010023923.1"/>
</dbReference>
<dbReference type="GeneID" id="415328"/>
<dbReference type="KEGG" id="gga:415328"/>
<dbReference type="CTD" id="53944"/>
<dbReference type="VEuPathDB" id="HostDB:geneid_415328"/>
<dbReference type="eggNOG" id="KOG1165">
    <property type="taxonomic scope" value="Eukaryota"/>
</dbReference>
<dbReference type="GeneTree" id="ENSGT00940000155628"/>
<dbReference type="HOGENOM" id="CLU_019279_2_0_1"/>
<dbReference type="InParanoid" id="Q5ZJS0"/>
<dbReference type="OrthoDB" id="5800476at2759"/>
<dbReference type="PhylomeDB" id="Q5ZJS0"/>
<dbReference type="TreeFam" id="TF313349"/>
<dbReference type="PRO" id="PR:Q5ZJS0"/>
<dbReference type="Proteomes" id="UP000000539">
    <property type="component" value="Chromosome 10"/>
</dbReference>
<dbReference type="Bgee" id="ENSGALG00000030812">
    <property type="expression patterns" value="Expressed in testis and 12 other cell types or tissues"/>
</dbReference>
<dbReference type="GO" id="GO:0005737">
    <property type="term" value="C:cytoplasm"/>
    <property type="evidence" value="ECO:0000318"/>
    <property type="project" value="GO_Central"/>
</dbReference>
<dbReference type="GO" id="GO:0005634">
    <property type="term" value="C:nucleus"/>
    <property type="evidence" value="ECO:0000318"/>
    <property type="project" value="GO_Central"/>
</dbReference>
<dbReference type="GO" id="GO:0005886">
    <property type="term" value="C:plasma membrane"/>
    <property type="evidence" value="ECO:0000318"/>
    <property type="project" value="GO_Central"/>
</dbReference>
<dbReference type="GO" id="GO:0005524">
    <property type="term" value="F:ATP binding"/>
    <property type="evidence" value="ECO:0007669"/>
    <property type="project" value="UniProtKB-KW"/>
</dbReference>
<dbReference type="GO" id="GO:0106310">
    <property type="term" value="F:protein serine kinase activity"/>
    <property type="evidence" value="ECO:0007669"/>
    <property type="project" value="RHEA"/>
</dbReference>
<dbReference type="GO" id="GO:0004674">
    <property type="term" value="F:protein serine/threonine kinase activity"/>
    <property type="evidence" value="ECO:0000318"/>
    <property type="project" value="GO_Central"/>
</dbReference>
<dbReference type="GO" id="GO:0006897">
    <property type="term" value="P:endocytosis"/>
    <property type="evidence" value="ECO:0000318"/>
    <property type="project" value="GO_Central"/>
</dbReference>
<dbReference type="GO" id="GO:0090263">
    <property type="term" value="P:positive regulation of canonical Wnt signaling pathway"/>
    <property type="evidence" value="ECO:0000318"/>
    <property type="project" value="GO_Central"/>
</dbReference>
<dbReference type="GO" id="GO:0007165">
    <property type="term" value="P:signal transduction"/>
    <property type="evidence" value="ECO:0000318"/>
    <property type="project" value="GO_Central"/>
</dbReference>
<dbReference type="GO" id="GO:0016055">
    <property type="term" value="P:Wnt signaling pathway"/>
    <property type="evidence" value="ECO:0007669"/>
    <property type="project" value="UniProtKB-KW"/>
</dbReference>
<dbReference type="CDD" id="cd14126">
    <property type="entry name" value="STKc_CK1_gamma"/>
    <property type="match status" value="1"/>
</dbReference>
<dbReference type="FunFam" id="1.10.510.10:FF:001113">
    <property type="entry name" value="Casein kinase 1 gamma 2"/>
    <property type="match status" value="1"/>
</dbReference>
<dbReference type="FunFam" id="3.30.200.20:FF:000018">
    <property type="entry name" value="Casein kinase I isoform gamma-1"/>
    <property type="match status" value="1"/>
</dbReference>
<dbReference type="Gene3D" id="3.30.200.20">
    <property type="entry name" value="Phosphorylase Kinase, domain 1"/>
    <property type="match status" value="1"/>
</dbReference>
<dbReference type="Gene3D" id="1.10.510.10">
    <property type="entry name" value="Transferase(Phosphotransferase) domain 1"/>
    <property type="match status" value="1"/>
</dbReference>
<dbReference type="InterPro" id="IPR022247">
    <property type="entry name" value="Casein_kinase-1_gamma_C"/>
</dbReference>
<dbReference type="InterPro" id="IPR050235">
    <property type="entry name" value="CK1_Ser-Thr_kinase"/>
</dbReference>
<dbReference type="InterPro" id="IPR011009">
    <property type="entry name" value="Kinase-like_dom_sf"/>
</dbReference>
<dbReference type="InterPro" id="IPR000719">
    <property type="entry name" value="Prot_kinase_dom"/>
</dbReference>
<dbReference type="InterPro" id="IPR017441">
    <property type="entry name" value="Protein_kinase_ATP_BS"/>
</dbReference>
<dbReference type="InterPro" id="IPR008271">
    <property type="entry name" value="Ser/Thr_kinase_AS"/>
</dbReference>
<dbReference type="PANTHER" id="PTHR11909">
    <property type="entry name" value="CASEIN KINASE-RELATED"/>
    <property type="match status" value="1"/>
</dbReference>
<dbReference type="Pfam" id="PF12605">
    <property type="entry name" value="CK1gamma_C"/>
    <property type="match status" value="1"/>
</dbReference>
<dbReference type="Pfam" id="PF00069">
    <property type="entry name" value="Pkinase"/>
    <property type="match status" value="1"/>
</dbReference>
<dbReference type="SMART" id="SM00220">
    <property type="entry name" value="S_TKc"/>
    <property type="match status" value="1"/>
</dbReference>
<dbReference type="SUPFAM" id="SSF56112">
    <property type="entry name" value="Protein kinase-like (PK-like)"/>
    <property type="match status" value="1"/>
</dbReference>
<dbReference type="PROSITE" id="PS00107">
    <property type="entry name" value="PROTEIN_KINASE_ATP"/>
    <property type="match status" value="1"/>
</dbReference>
<dbReference type="PROSITE" id="PS50011">
    <property type="entry name" value="PROTEIN_KINASE_DOM"/>
    <property type="match status" value="1"/>
</dbReference>
<dbReference type="PROSITE" id="PS00108">
    <property type="entry name" value="PROTEIN_KINASE_ST"/>
    <property type="match status" value="1"/>
</dbReference>
<reference key="1">
    <citation type="journal article" date="2005" name="Genome Biol.">
        <title>Full-length cDNAs from chicken bursal lymphocytes to facilitate gene function analysis.</title>
        <authorList>
            <person name="Caldwell R.B."/>
            <person name="Kierzek A.M."/>
            <person name="Arakawa H."/>
            <person name="Bezzubov Y."/>
            <person name="Zaim J."/>
            <person name="Fiedler P."/>
            <person name="Kutter S."/>
            <person name="Blagodatski A."/>
            <person name="Kostovska D."/>
            <person name="Koter M."/>
            <person name="Plachy J."/>
            <person name="Carninci P."/>
            <person name="Hayashizaki Y."/>
            <person name="Buerstedde J.-M."/>
        </authorList>
    </citation>
    <scope>NUCLEOTIDE SEQUENCE [LARGE SCALE MRNA]</scope>
    <source>
        <strain>CB</strain>
        <tissue>Bursa of Fabricius</tissue>
    </source>
</reference>
<protein>
    <recommendedName>
        <fullName>Casein kinase I isoform gamma-1</fullName>
        <shortName>CKI-gamma 1</shortName>
        <ecNumber>2.7.11.1</ecNumber>
    </recommendedName>
</protein>
<proteinExistence type="evidence at transcript level"/>